<name>ASP36_ARATH</name>
<proteinExistence type="evidence at protein level"/>
<comment type="function">
    <text evidence="4">Displays aspartic proteolytic activity (PubMed:27872247). Together with A39, contributes to pollen and ovule development, including the apical cell wall constitution of the growing pollen tubes (PubMed:27872247).</text>
</comment>
<comment type="subcellular location">
    <subcellularLocation>
        <location evidence="4">Cell membrane</location>
        <topology evidence="1">Lipid-anchor</topology>
        <topology evidence="1">GPI-anchor</topology>
    </subcellularLocation>
    <subcellularLocation>
        <location evidence="4">Cytoplasm</location>
        <location evidence="4">Cytosol</location>
    </subcellularLocation>
    <text evidence="4">Displays punctate cytosolic localization and colocalizes with the GPI-anchored protein COBL10 at the plasma membrane and in the cytosol (PubMed:27872247). In pollen grains, mainly present at the plasma membrane and in reticular structures in the cytosol (PubMed:27872247). In pollen tubes, exhibits a punctate localization in the cytosol and occurs weakly at the plasma membrane (PubMed:27872247).</text>
</comment>
<comment type="tissue specificity">
    <text evidence="4">Highly expressed in pollen and pollen tubes (PubMed:27872247). Mostly expressed in roots, flowers and inflorescence, and at lower levels in stems, seedlings and siliques (PubMed:27872247).</text>
</comment>
<comment type="developmental stage">
    <text evidence="4">In flowers, expressed exclusively in the pollen and growing pollen tubes (PubMed:27872247). During microspore development, confined to tricellular pollen (PubMed:27872247).</text>
</comment>
<comment type="disruption phenotype">
    <text evidence="4">Reduced pollen activity and germination rate leading to a decreased male transmission efficiency (PubMed:27872247). The double mutant a36 a39 produces inviable pollen which undergoes apoptosis-like programmed cell death, exhibits a compromised pollen tubes micropylar guidance and has degenerated female gametes (PubMed:27872247). The double mutant a36 a39 accumulates abnormally highly methylesterified homogalacturonans and xyloglucans in the apical pollen tube wall (PubMed:27872247).</text>
</comment>
<comment type="similarity">
    <text evidence="3 6">Belongs to the peptidase A1 family.</text>
</comment>
<comment type="sequence caution" evidence="6">
    <conflict type="erroneous initiation">
        <sequence resource="EMBL-CDS" id="BAB09366"/>
    </conflict>
    <text>Truncated N-terminus.</text>
</comment>
<reference key="1">
    <citation type="submission" date="1999-04" db="EMBL/GenBank/DDBJ databases">
        <title>Structural analysis of Arabidopsis thaliana chromosome 5. XI.</title>
        <authorList>
            <person name="Kaneko T."/>
            <person name="Katoh T."/>
            <person name="Asamizu E."/>
            <person name="Sato S."/>
            <person name="Nakamura Y."/>
            <person name="Kotani H."/>
            <person name="Tabata S."/>
        </authorList>
    </citation>
    <scope>NUCLEOTIDE SEQUENCE [LARGE SCALE GENOMIC DNA]</scope>
    <source>
        <strain>cv. Columbia</strain>
    </source>
</reference>
<reference key="2">
    <citation type="journal article" date="2017" name="Plant J.">
        <title>Araport11: a complete reannotation of the Arabidopsis thaliana reference genome.</title>
        <authorList>
            <person name="Cheng C.Y."/>
            <person name="Krishnakumar V."/>
            <person name="Chan A.P."/>
            <person name="Thibaud-Nissen F."/>
            <person name="Schobel S."/>
            <person name="Town C.D."/>
        </authorList>
    </citation>
    <scope>GENOME REANNOTATION</scope>
    <source>
        <strain>cv. Columbia</strain>
    </source>
</reference>
<reference key="3">
    <citation type="submission" date="2005-05" db="EMBL/GenBank/DDBJ databases">
        <title>Arabidopsis ORF clones.</title>
        <authorList>
            <person name="Kim C.J."/>
            <person name="Chen H."/>
            <person name="Cheuk R.F."/>
            <person name="Shinn P."/>
            <person name="Ecker J.R."/>
        </authorList>
    </citation>
    <scope>NUCLEOTIDE SEQUENCE [LARGE SCALE MRNA]</scope>
    <source>
        <strain>cv. Columbia</strain>
    </source>
</reference>
<reference key="4">
    <citation type="journal article" date="2017" name="Plant Physiol.">
        <title>Two membrane-anchored aspartic proteases contribute to pollen and ovule development.</title>
        <authorList>
            <person name="Gao H."/>
            <person name="Zhang Y."/>
            <person name="Wang W."/>
            <person name="Zhao K."/>
            <person name="Liu C."/>
            <person name="Bai L."/>
            <person name="Li R."/>
            <person name="Guo Y."/>
        </authorList>
    </citation>
    <scope>FUNCTION</scope>
    <scope>MUTAGENESIS OF ASP-96 AND ASP-310</scope>
    <scope>DISRUPTION PHENOTYPE</scope>
    <scope>TISSUE SPECIFICITY</scope>
    <scope>SUBCELLULAR LOCATION</scope>
    <scope>DEVELOPMENTAL STAGE</scope>
    <source>
        <strain>cv. Columbia</strain>
    </source>
</reference>
<reference key="5">
    <citation type="journal article" date="2017" name="Plant Signal. Behav.">
        <title>Arabidopsis aspartic proteases A36 and A39 play roles in plant reproduction.</title>
        <authorList>
            <person name="Gao H."/>
            <person name="Li R."/>
            <person name="Guo Y."/>
        </authorList>
    </citation>
    <scope>REVIEW</scope>
</reference>
<accession>Q4V3D2</accession>
<accession>Q9FG60</accession>
<gene>
    <name evidence="5" type="primary">A36</name>
    <name evidence="7" type="ordered locus">At5g36260</name>
    <name evidence="8" type="ORF">T30G6.12</name>
</gene>
<organism>
    <name type="scientific">Arabidopsis thaliana</name>
    <name type="common">Mouse-ear cress</name>
    <dbReference type="NCBI Taxonomy" id="3702"/>
    <lineage>
        <taxon>Eukaryota</taxon>
        <taxon>Viridiplantae</taxon>
        <taxon>Streptophyta</taxon>
        <taxon>Embryophyta</taxon>
        <taxon>Tracheophyta</taxon>
        <taxon>Spermatophyta</taxon>
        <taxon>Magnoliopsida</taxon>
        <taxon>eudicotyledons</taxon>
        <taxon>Gunneridae</taxon>
        <taxon>Pentapetalae</taxon>
        <taxon>rosids</taxon>
        <taxon>malvids</taxon>
        <taxon>Brassicales</taxon>
        <taxon>Brassicaceae</taxon>
        <taxon>Camelineae</taxon>
        <taxon>Arabidopsis</taxon>
    </lineage>
</organism>
<protein>
    <recommendedName>
        <fullName evidence="5">Aspartic proteinase 36</fullName>
        <ecNumber evidence="4">3.4.23.-</ecNumber>
    </recommendedName>
</protein>
<dbReference type="EC" id="3.4.23.-" evidence="4"/>
<dbReference type="EMBL" id="AB026661">
    <property type="protein sequence ID" value="BAB09366.1"/>
    <property type="status" value="ALT_INIT"/>
    <property type="molecule type" value="Genomic_DNA"/>
</dbReference>
<dbReference type="EMBL" id="CP002688">
    <property type="protein sequence ID" value="AED94063.1"/>
    <property type="molecule type" value="Genomic_DNA"/>
</dbReference>
<dbReference type="EMBL" id="BT023424">
    <property type="protein sequence ID" value="AAY56415.1"/>
    <property type="molecule type" value="mRNA"/>
</dbReference>
<dbReference type="RefSeq" id="NP_198475.2">
    <property type="nucleotide sequence ID" value="NM_123017.4"/>
</dbReference>
<dbReference type="SMR" id="Q4V3D2"/>
<dbReference type="FunCoup" id="Q4V3D2">
    <property type="interactions" value="132"/>
</dbReference>
<dbReference type="MEROPS" id="A01.A58"/>
<dbReference type="GlyCosmos" id="Q4V3D2">
    <property type="glycosylation" value="6 sites, No reported glycans"/>
</dbReference>
<dbReference type="GlyGen" id="Q4V3D2">
    <property type="glycosylation" value="6 sites"/>
</dbReference>
<dbReference type="PaxDb" id="3702-AT5G36260.1"/>
<dbReference type="ProteomicsDB" id="185300"/>
<dbReference type="EnsemblPlants" id="AT5G36260.1">
    <property type="protein sequence ID" value="AT5G36260.1"/>
    <property type="gene ID" value="AT5G36260"/>
</dbReference>
<dbReference type="GeneID" id="833623"/>
<dbReference type="Gramene" id="AT5G36260.1">
    <property type="protein sequence ID" value="AT5G36260.1"/>
    <property type="gene ID" value="AT5G36260"/>
</dbReference>
<dbReference type="KEGG" id="ath:AT5G36260"/>
<dbReference type="Araport" id="AT5G36260"/>
<dbReference type="TAIR" id="AT5G36260">
    <property type="gene designation" value="A36"/>
</dbReference>
<dbReference type="eggNOG" id="KOG1339">
    <property type="taxonomic scope" value="Eukaryota"/>
</dbReference>
<dbReference type="HOGENOM" id="CLU_005738_7_0_1"/>
<dbReference type="InParanoid" id="Q4V3D2"/>
<dbReference type="OMA" id="KKPCSYH"/>
<dbReference type="PhylomeDB" id="Q4V3D2"/>
<dbReference type="PRO" id="PR:Q4V3D2"/>
<dbReference type="Proteomes" id="UP000006548">
    <property type="component" value="Chromosome 5"/>
</dbReference>
<dbReference type="ExpressionAtlas" id="Q4V3D2">
    <property type="expression patterns" value="baseline and differential"/>
</dbReference>
<dbReference type="GO" id="GO:0005737">
    <property type="term" value="C:cytoplasm"/>
    <property type="evidence" value="ECO:0000314"/>
    <property type="project" value="UniProtKB"/>
</dbReference>
<dbReference type="GO" id="GO:0005829">
    <property type="term" value="C:cytosol"/>
    <property type="evidence" value="ECO:0000314"/>
    <property type="project" value="UniProtKB"/>
</dbReference>
<dbReference type="GO" id="GO:0005886">
    <property type="term" value="C:plasma membrane"/>
    <property type="evidence" value="ECO:0000314"/>
    <property type="project" value="UniProtKB"/>
</dbReference>
<dbReference type="GO" id="GO:0090406">
    <property type="term" value="C:pollen tube"/>
    <property type="evidence" value="ECO:0000314"/>
    <property type="project" value="UniProtKB"/>
</dbReference>
<dbReference type="GO" id="GO:0098552">
    <property type="term" value="C:side of membrane"/>
    <property type="evidence" value="ECO:0007669"/>
    <property type="project" value="UniProtKB-KW"/>
</dbReference>
<dbReference type="GO" id="GO:0004190">
    <property type="term" value="F:aspartic-type endopeptidase activity"/>
    <property type="evidence" value="ECO:0000314"/>
    <property type="project" value="UniProtKB"/>
</dbReference>
<dbReference type="GO" id="GO:0009555">
    <property type="term" value="P:pollen development"/>
    <property type="evidence" value="ECO:0000315"/>
    <property type="project" value="UniProtKB"/>
</dbReference>
<dbReference type="GO" id="GO:0009846">
    <property type="term" value="P:pollen germination"/>
    <property type="evidence" value="ECO:0000315"/>
    <property type="project" value="UniProtKB"/>
</dbReference>
<dbReference type="GO" id="GO:0009860">
    <property type="term" value="P:pollen tube growth"/>
    <property type="evidence" value="ECO:0000315"/>
    <property type="project" value="UniProtKB"/>
</dbReference>
<dbReference type="GO" id="GO:0010183">
    <property type="term" value="P:pollen tube guidance"/>
    <property type="evidence" value="ECO:0000315"/>
    <property type="project" value="UniProtKB"/>
</dbReference>
<dbReference type="GO" id="GO:0030163">
    <property type="term" value="P:protein catabolic process"/>
    <property type="evidence" value="ECO:0000314"/>
    <property type="project" value="UniProtKB"/>
</dbReference>
<dbReference type="GO" id="GO:0006508">
    <property type="term" value="P:proteolysis"/>
    <property type="evidence" value="ECO:0000314"/>
    <property type="project" value="UniProtKB"/>
</dbReference>
<dbReference type="CDD" id="cd05476">
    <property type="entry name" value="pepsin_A_like_plant"/>
    <property type="match status" value="1"/>
</dbReference>
<dbReference type="FunFam" id="2.40.70.10:FF:000070">
    <property type="entry name" value="Aspartyl protease family protein"/>
    <property type="match status" value="1"/>
</dbReference>
<dbReference type="FunFam" id="2.40.70.10:FF:000028">
    <property type="entry name" value="Eukaryotic aspartyl protease family protein"/>
    <property type="match status" value="1"/>
</dbReference>
<dbReference type="Gene3D" id="2.40.70.10">
    <property type="entry name" value="Acid Proteases"/>
    <property type="match status" value="2"/>
</dbReference>
<dbReference type="InterPro" id="IPR001461">
    <property type="entry name" value="Aspartic_peptidase_A1"/>
</dbReference>
<dbReference type="InterPro" id="IPR034161">
    <property type="entry name" value="Pepsin-like_plant"/>
</dbReference>
<dbReference type="InterPro" id="IPR033121">
    <property type="entry name" value="PEPTIDASE_A1"/>
</dbReference>
<dbReference type="InterPro" id="IPR021109">
    <property type="entry name" value="Peptidase_aspartic_dom_sf"/>
</dbReference>
<dbReference type="InterPro" id="IPR032799">
    <property type="entry name" value="TAXi_C"/>
</dbReference>
<dbReference type="InterPro" id="IPR032861">
    <property type="entry name" value="TAXi_N"/>
</dbReference>
<dbReference type="PANTHER" id="PTHR13683:SF661">
    <property type="entry name" value="ASPARTIC PROTEINASE 36"/>
    <property type="match status" value="1"/>
</dbReference>
<dbReference type="PANTHER" id="PTHR13683">
    <property type="entry name" value="ASPARTYL PROTEASES"/>
    <property type="match status" value="1"/>
</dbReference>
<dbReference type="Pfam" id="PF14541">
    <property type="entry name" value="TAXi_C"/>
    <property type="match status" value="1"/>
</dbReference>
<dbReference type="Pfam" id="PF14543">
    <property type="entry name" value="TAXi_N"/>
    <property type="match status" value="1"/>
</dbReference>
<dbReference type="PRINTS" id="PR00792">
    <property type="entry name" value="PEPSIN"/>
</dbReference>
<dbReference type="SUPFAM" id="SSF50630">
    <property type="entry name" value="Acid proteases"/>
    <property type="match status" value="1"/>
</dbReference>
<dbReference type="PROSITE" id="PS51767">
    <property type="entry name" value="PEPTIDASE_A1"/>
    <property type="match status" value="1"/>
</dbReference>
<feature type="signal peptide" evidence="1">
    <location>
        <begin position="1"/>
        <end position="27"/>
    </location>
</feature>
<feature type="chain" id="PRO_0000450671" description="Aspartic proteinase 36">
    <location>
        <begin position="28"/>
        <end position="456"/>
    </location>
</feature>
<feature type="propeptide" id="PRO_0000450672" description="Removed in mature form" evidence="1">
    <location>
        <begin position="457"/>
        <end position="482"/>
    </location>
</feature>
<feature type="domain" description="Peptidase A1" evidence="3">
    <location>
        <begin position="78"/>
        <end position="429"/>
    </location>
</feature>
<feature type="active site" evidence="3">
    <location>
        <position position="96"/>
    </location>
</feature>
<feature type="active site" evidence="3">
    <location>
        <position position="310"/>
    </location>
</feature>
<feature type="lipid moiety-binding region" description="GPI-anchor amidated serine" evidence="1">
    <location>
        <position position="456"/>
    </location>
</feature>
<feature type="glycosylation site" description="N-linked (GlcNAc...) asparagine" evidence="2">
    <location>
        <position position="32"/>
    </location>
</feature>
<feature type="glycosylation site" description="N-linked (GlcNAc...) asparagine" evidence="2">
    <location>
        <position position="178"/>
    </location>
</feature>
<feature type="glycosylation site" description="N-linked (GlcNAc...) asparagine" evidence="2">
    <location>
        <position position="204"/>
    </location>
</feature>
<feature type="glycosylation site" description="N-linked (GlcNAc...) asparagine" evidence="2">
    <location>
        <position position="226"/>
    </location>
</feature>
<feature type="glycosylation site" description="N-linked (GlcNAc...) asparagine" evidence="2">
    <location>
        <position position="432"/>
    </location>
</feature>
<feature type="glycosylation site" description="N-linked (GlcNAc...) asparagine" evidence="2">
    <location>
        <position position="463"/>
    </location>
</feature>
<feature type="disulfide bond" evidence="3">
    <location>
        <begin position="347"/>
        <end position="388"/>
    </location>
</feature>
<feature type="mutagenesis site" description="Impaired proteolytic activity; when associated with N-310." evidence="4">
    <original>D</original>
    <variation>N</variation>
    <location>
        <position position="96"/>
    </location>
</feature>
<feature type="mutagenesis site" description="Impaired proteolytic activity; when associated with N-96." evidence="4">
    <original>D</original>
    <variation>N</variation>
    <location>
        <position position="310"/>
    </location>
</feature>
<sequence>MVTTMDPSRISRIVAVVFVLVIQVVSGNFVFNVTHKFAGKEKQLSELKSHDSFRHARMLANIDLPLGGDSRADSIGLYFTKIKLGSPPKEYYVQVDTGSDILWVNCAPCPKCPVKTDLGIPLSLYDSKTSSTSKNVGCEDDFCSFIMQSETCGAKKPCSYHVVYGDGSTSDGDFIKDNITLEQVTGNLRTAPLAQEVVFGCGKNQSGQLGQTDSAVDGIMGFGQSNTSIISQLAAGGSTKRIFSHCLDNMNGGGIFAVGEVESPVVKTTPIVPNQVHYNVILKGMDVDGDPIDLPPSLASTNGDGGTIIDSGTTLAYLPQNLYNSLIEKITAKQQVKLHMVQETFACFSFTSNTDKAFPVVNLHFEDSLKLSVYPHDYLFSLREDMYCFGWQSGGMTTQDGADVILLGDLVLSNKLVVYDLENEVIGWADHNCSSSIKVKDGSGAAYQLGAENLISAASSVMNGTLVTLLSILIWVFHSFTS</sequence>
<keyword id="KW-0064">Aspartyl protease</keyword>
<keyword id="KW-1003">Cell membrane</keyword>
<keyword id="KW-0963">Cytoplasm</keyword>
<keyword id="KW-1015">Disulfide bond</keyword>
<keyword id="KW-0325">Glycoprotein</keyword>
<keyword id="KW-0336">GPI-anchor</keyword>
<keyword id="KW-0378">Hydrolase</keyword>
<keyword id="KW-0449">Lipoprotein</keyword>
<keyword id="KW-0472">Membrane</keyword>
<keyword id="KW-0645">Protease</keyword>
<keyword id="KW-1185">Reference proteome</keyword>
<keyword id="KW-0732">Signal</keyword>
<evidence type="ECO:0000255" key="1"/>
<evidence type="ECO:0000255" key="2">
    <source>
        <dbReference type="PROSITE-ProRule" id="PRU00498"/>
    </source>
</evidence>
<evidence type="ECO:0000255" key="3">
    <source>
        <dbReference type="PROSITE-ProRule" id="PRU01103"/>
    </source>
</evidence>
<evidence type="ECO:0000269" key="4">
    <source>
    </source>
</evidence>
<evidence type="ECO:0000303" key="5">
    <source>
    </source>
</evidence>
<evidence type="ECO:0000305" key="6"/>
<evidence type="ECO:0000312" key="7">
    <source>
        <dbReference type="Araport" id="AT5G36260"/>
    </source>
</evidence>
<evidence type="ECO:0000312" key="8">
    <source>
        <dbReference type="EMBL" id="AED94063.1"/>
    </source>
</evidence>